<gene>
    <name evidence="1" type="primary">ftsH</name>
    <name type="ordered locus">jhp_0356</name>
</gene>
<evidence type="ECO:0000255" key="1">
    <source>
        <dbReference type="HAMAP-Rule" id="MF_01458"/>
    </source>
</evidence>
<keyword id="KW-0067">ATP-binding</keyword>
<keyword id="KW-0997">Cell inner membrane</keyword>
<keyword id="KW-1003">Cell membrane</keyword>
<keyword id="KW-0378">Hydrolase</keyword>
<keyword id="KW-0472">Membrane</keyword>
<keyword id="KW-0479">Metal-binding</keyword>
<keyword id="KW-0482">Metalloprotease</keyword>
<keyword id="KW-0547">Nucleotide-binding</keyword>
<keyword id="KW-0645">Protease</keyword>
<keyword id="KW-0812">Transmembrane</keyword>
<keyword id="KW-1133">Transmembrane helix</keyword>
<keyword id="KW-0862">Zinc</keyword>
<protein>
    <recommendedName>
        <fullName evidence="1">ATP-dependent zinc metalloprotease FtsH</fullName>
        <ecNumber evidence="1">3.4.24.-</ecNumber>
    </recommendedName>
</protein>
<name>FTSH_HELPJ</name>
<organism>
    <name type="scientific">Helicobacter pylori (strain J99 / ATCC 700824)</name>
    <name type="common">Campylobacter pylori J99</name>
    <dbReference type="NCBI Taxonomy" id="85963"/>
    <lineage>
        <taxon>Bacteria</taxon>
        <taxon>Pseudomonadati</taxon>
        <taxon>Campylobacterota</taxon>
        <taxon>Epsilonproteobacteria</taxon>
        <taxon>Campylobacterales</taxon>
        <taxon>Helicobacteraceae</taxon>
        <taxon>Helicobacter</taxon>
    </lineage>
</organism>
<sequence>MKPTNEPKKPFFQSPIVLAVLGGILLIFFLRSFNSDGSFSDNFLASSTKNVSYHEIKQLISNNEVENVSIGQTLIKASHKEGNNRVIYIAKRVPDLTLVPLLDEKKINYSGFSESNFFTDMLGWLMPILVILGLWMFMANRMQKNMGGGIFGMGSAKKLINAEKPNVRFNDMAGNEEAKEEVVEIVDFLKYPERYANLGAKIPKGVLLVGPPGTGKTLLAKAVAGEAHVPFFSMGGSSFIEMFVGLGASRVRDLFETAKKQAPSIIFIDEIDAIGKSRAAGGMISGNDEREQTLNQLLAEMDGFGSENAPVIVLAATNRPEILDPALMRPGRFDRQVLVDKPDFNGRVEILKVHIKGVKLANDVNLQEVAKLTAGLAGADLANIINEAALLAGRNNQKEVKQQHLKEAVERGIAGLEKKSRRISPKEKKIVAYHESGHAVISEMTKGSTRVNKVSIIPRGMAALGYTLNTPEENKYLMQKHELIAEIDVLLGGRAAEEVFLEEISTGASNDLERATDIIKGMVSYYGMSSVSGLMVLEKQRNAFLGGGYGSSREFSEKTAEEMDLFIKNLLEERYQHVKQTLSDYREAIEIMVKELFDKEVITGERVREIISEYEAANNLESRLIPLEEQAS</sequence>
<proteinExistence type="inferred from homology"/>
<accession>Q9ZM66</accession>
<feature type="chain" id="PRO_0000084637" description="ATP-dependent zinc metalloprotease FtsH">
    <location>
        <begin position="1"/>
        <end position="632"/>
    </location>
</feature>
<feature type="topological domain" description="Cytoplasmic" evidence="1">
    <location>
        <begin position="1"/>
        <end position="9"/>
    </location>
</feature>
<feature type="transmembrane region" description="Helical" evidence="1">
    <location>
        <begin position="10"/>
        <end position="30"/>
    </location>
</feature>
<feature type="topological domain" description="Periplasmic" evidence="1">
    <location>
        <begin position="31"/>
        <end position="116"/>
    </location>
</feature>
<feature type="transmembrane region" description="Helical" evidence="1">
    <location>
        <begin position="117"/>
        <end position="137"/>
    </location>
</feature>
<feature type="topological domain" description="Cytoplasmic" evidence="1">
    <location>
        <begin position="138"/>
        <end position="632"/>
    </location>
</feature>
<feature type="active site" evidence="1">
    <location>
        <position position="435"/>
    </location>
</feature>
<feature type="binding site" evidence="1">
    <location>
        <begin position="210"/>
        <end position="217"/>
    </location>
    <ligand>
        <name>ATP</name>
        <dbReference type="ChEBI" id="CHEBI:30616"/>
    </ligand>
</feature>
<feature type="binding site" evidence="1">
    <location>
        <position position="434"/>
    </location>
    <ligand>
        <name>Zn(2+)</name>
        <dbReference type="ChEBI" id="CHEBI:29105"/>
        <note>catalytic</note>
    </ligand>
</feature>
<feature type="binding site" evidence="1">
    <location>
        <position position="438"/>
    </location>
    <ligand>
        <name>Zn(2+)</name>
        <dbReference type="ChEBI" id="CHEBI:29105"/>
        <note>catalytic</note>
    </ligand>
</feature>
<feature type="binding site" evidence="1">
    <location>
        <position position="511"/>
    </location>
    <ligand>
        <name>Zn(2+)</name>
        <dbReference type="ChEBI" id="CHEBI:29105"/>
        <note>catalytic</note>
    </ligand>
</feature>
<reference key="1">
    <citation type="journal article" date="1999" name="Nature">
        <title>Genomic sequence comparison of two unrelated isolates of the human gastric pathogen Helicobacter pylori.</title>
        <authorList>
            <person name="Alm R.A."/>
            <person name="Ling L.-S.L."/>
            <person name="Moir D.T."/>
            <person name="King B.L."/>
            <person name="Brown E.D."/>
            <person name="Doig P.C."/>
            <person name="Smith D.R."/>
            <person name="Noonan B."/>
            <person name="Guild B.C."/>
            <person name="deJonge B.L."/>
            <person name="Carmel G."/>
            <person name="Tummino P.J."/>
            <person name="Caruso A."/>
            <person name="Uria-Nickelsen M."/>
            <person name="Mills D.M."/>
            <person name="Ives C."/>
            <person name="Gibson R."/>
            <person name="Merberg D."/>
            <person name="Mills S.D."/>
            <person name="Jiang Q."/>
            <person name="Taylor D.E."/>
            <person name="Vovis G.F."/>
            <person name="Trust T.J."/>
        </authorList>
    </citation>
    <scope>NUCLEOTIDE SEQUENCE [LARGE SCALE GENOMIC DNA]</scope>
    <source>
        <strain>J99 / ATCC 700824</strain>
    </source>
</reference>
<comment type="function">
    <text evidence="1">Acts as a processive, ATP-dependent zinc metallopeptidase for both cytoplasmic and membrane proteins. Plays a role in the quality control of integral membrane proteins.</text>
</comment>
<comment type="cofactor">
    <cofactor evidence="1">
        <name>Zn(2+)</name>
        <dbReference type="ChEBI" id="CHEBI:29105"/>
    </cofactor>
    <text evidence="1">Binds 1 zinc ion per subunit.</text>
</comment>
<comment type="subunit">
    <text evidence="1">Homohexamer.</text>
</comment>
<comment type="subcellular location">
    <subcellularLocation>
        <location evidence="1">Cell inner membrane</location>
        <topology evidence="1">Multi-pass membrane protein</topology>
        <orientation evidence="1">Cytoplasmic side</orientation>
    </subcellularLocation>
</comment>
<comment type="similarity">
    <text evidence="1">In the central section; belongs to the AAA ATPase family.</text>
</comment>
<comment type="similarity">
    <text evidence="1">In the C-terminal section; belongs to the peptidase M41 family.</text>
</comment>
<dbReference type="EC" id="3.4.24.-" evidence="1"/>
<dbReference type="EMBL" id="AE001439">
    <property type="protein sequence ID" value="AAD05932.1"/>
    <property type="molecule type" value="Genomic_DNA"/>
</dbReference>
<dbReference type="PIR" id="D71941">
    <property type="entry name" value="D71941"/>
</dbReference>
<dbReference type="RefSeq" id="WP_000805311.1">
    <property type="nucleotide sequence ID" value="NZ_CP011330.1"/>
</dbReference>
<dbReference type="SMR" id="Q9ZM66"/>
<dbReference type="KEGG" id="hpj:jhp_0356"/>
<dbReference type="PATRIC" id="fig|85963.30.peg.655"/>
<dbReference type="eggNOG" id="COG0465">
    <property type="taxonomic scope" value="Bacteria"/>
</dbReference>
<dbReference type="Proteomes" id="UP000000804">
    <property type="component" value="Chromosome"/>
</dbReference>
<dbReference type="GO" id="GO:0005886">
    <property type="term" value="C:plasma membrane"/>
    <property type="evidence" value="ECO:0007669"/>
    <property type="project" value="UniProtKB-SubCell"/>
</dbReference>
<dbReference type="GO" id="GO:0005524">
    <property type="term" value="F:ATP binding"/>
    <property type="evidence" value="ECO:0007669"/>
    <property type="project" value="UniProtKB-UniRule"/>
</dbReference>
<dbReference type="GO" id="GO:0016887">
    <property type="term" value="F:ATP hydrolysis activity"/>
    <property type="evidence" value="ECO:0007669"/>
    <property type="project" value="UniProtKB-UniRule"/>
</dbReference>
<dbReference type="GO" id="GO:0004176">
    <property type="term" value="F:ATP-dependent peptidase activity"/>
    <property type="evidence" value="ECO:0007669"/>
    <property type="project" value="InterPro"/>
</dbReference>
<dbReference type="GO" id="GO:0004222">
    <property type="term" value="F:metalloendopeptidase activity"/>
    <property type="evidence" value="ECO:0007669"/>
    <property type="project" value="InterPro"/>
</dbReference>
<dbReference type="GO" id="GO:0008270">
    <property type="term" value="F:zinc ion binding"/>
    <property type="evidence" value="ECO:0007669"/>
    <property type="project" value="UniProtKB-UniRule"/>
</dbReference>
<dbReference type="GO" id="GO:0030163">
    <property type="term" value="P:protein catabolic process"/>
    <property type="evidence" value="ECO:0007669"/>
    <property type="project" value="UniProtKB-UniRule"/>
</dbReference>
<dbReference type="GO" id="GO:0006508">
    <property type="term" value="P:proteolysis"/>
    <property type="evidence" value="ECO:0007669"/>
    <property type="project" value="UniProtKB-KW"/>
</dbReference>
<dbReference type="CDD" id="cd19501">
    <property type="entry name" value="RecA-like_FtsH"/>
    <property type="match status" value="1"/>
</dbReference>
<dbReference type="FunFam" id="1.10.8.60:FF:000001">
    <property type="entry name" value="ATP-dependent zinc metalloprotease FtsH"/>
    <property type="match status" value="1"/>
</dbReference>
<dbReference type="FunFam" id="1.20.58.760:FF:000001">
    <property type="entry name" value="ATP-dependent zinc metalloprotease FtsH"/>
    <property type="match status" value="1"/>
</dbReference>
<dbReference type="FunFam" id="3.40.50.300:FF:000001">
    <property type="entry name" value="ATP-dependent zinc metalloprotease FtsH"/>
    <property type="match status" value="1"/>
</dbReference>
<dbReference type="Gene3D" id="1.10.8.60">
    <property type="match status" value="1"/>
</dbReference>
<dbReference type="Gene3D" id="3.30.720.210">
    <property type="match status" value="1"/>
</dbReference>
<dbReference type="Gene3D" id="3.40.50.300">
    <property type="entry name" value="P-loop containing nucleotide triphosphate hydrolases"/>
    <property type="match status" value="1"/>
</dbReference>
<dbReference type="Gene3D" id="1.20.58.760">
    <property type="entry name" value="Peptidase M41"/>
    <property type="match status" value="1"/>
</dbReference>
<dbReference type="HAMAP" id="MF_01458">
    <property type="entry name" value="FtsH"/>
    <property type="match status" value="1"/>
</dbReference>
<dbReference type="InterPro" id="IPR003593">
    <property type="entry name" value="AAA+_ATPase"/>
</dbReference>
<dbReference type="InterPro" id="IPR041569">
    <property type="entry name" value="AAA_lid_3"/>
</dbReference>
<dbReference type="InterPro" id="IPR050928">
    <property type="entry name" value="ATP-dep_Zn_Metalloprotease"/>
</dbReference>
<dbReference type="InterPro" id="IPR003959">
    <property type="entry name" value="ATPase_AAA_core"/>
</dbReference>
<dbReference type="InterPro" id="IPR003960">
    <property type="entry name" value="ATPase_AAA_CS"/>
</dbReference>
<dbReference type="InterPro" id="IPR005936">
    <property type="entry name" value="FtsH"/>
</dbReference>
<dbReference type="InterPro" id="IPR027417">
    <property type="entry name" value="P-loop_NTPase"/>
</dbReference>
<dbReference type="InterPro" id="IPR011546">
    <property type="entry name" value="Pept_M41_FtsH_extracell"/>
</dbReference>
<dbReference type="InterPro" id="IPR000642">
    <property type="entry name" value="Peptidase_M41"/>
</dbReference>
<dbReference type="InterPro" id="IPR037219">
    <property type="entry name" value="Peptidase_M41-like"/>
</dbReference>
<dbReference type="NCBIfam" id="TIGR01241">
    <property type="entry name" value="FtsH_fam"/>
    <property type="match status" value="1"/>
</dbReference>
<dbReference type="PANTHER" id="PTHR43655:SF2">
    <property type="entry name" value="AFG3 LIKE MATRIX AAA PEPTIDASE SUBUNIT 2, ISOFORM A"/>
    <property type="match status" value="1"/>
</dbReference>
<dbReference type="PANTHER" id="PTHR43655">
    <property type="entry name" value="ATP-DEPENDENT PROTEASE"/>
    <property type="match status" value="1"/>
</dbReference>
<dbReference type="Pfam" id="PF00004">
    <property type="entry name" value="AAA"/>
    <property type="match status" value="1"/>
</dbReference>
<dbReference type="Pfam" id="PF17862">
    <property type="entry name" value="AAA_lid_3"/>
    <property type="match status" value="1"/>
</dbReference>
<dbReference type="Pfam" id="PF06480">
    <property type="entry name" value="FtsH_ext"/>
    <property type="match status" value="1"/>
</dbReference>
<dbReference type="Pfam" id="PF01434">
    <property type="entry name" value="Peptidase_M41"/>
    <property type="match status" value="1"/>
</dbReference>
<dbReference type="SMART" id="SM00382">
    <property type="entry name" value="AAA"/>
    <property type="match status" value="1"/>
</dbReference>
<dbReference type="SUPFAM" id="SSF140990">
    <property type="entry name" value="FtsH protease domain-like"/>
    <property type="match status" value="1"/>
</dbReference>
<dbReference type="SUPFAM" id="SSF52540">
    <property type="entry name" value="P-loop containing nucleoside triphosphate hydrolases"/>
    <property type="match status" value="1"/>
</dbReference>
<dbReference type="PROSITE" id="PS00674">
    <property type="entry name" value="AAA"/>
    <property type="match status" value="1"/>
</dbReference>